<name>NUD13_MOUSE</name>
<reference key="1">
    <citation type="journal article" date="2005" name="Science">
        <title>The transcriptional landscape of the mammalian genome.</title>
        <authorList>
            <person name="Carninci P."/>
            <person name="Kasukawa T."/>
            <person name="Katayama S."/>
            <person name="Gough J."/>
            <person name="Frith M.C."/>
            <person name="Maeda N."/>
            <person name="Oyama R."/>
            <person name="Ravasi T."/>
            <person name="Lenhard B."/>
            <person name="Wells C."/>
            <person name="Kodzius R."/>
            <person name="Shimokawa K."/>
            <person name="Bajic V.B."/>
            <person name="Brenner S.E."/>
            <person name="Batalov S."/>
            <person name="Forrest A.R."/>
            <person name="Zavolan M."/>
            <person name="Davis M.J."/>
            <person name="Wilming L.G."/>
            <person name="Aidinis V."/>
            <person name="Allen J.E."/>
            <person name="Ambesi-Impiombato A."/>
            <person name="Apweiler R."/>
            <person name="Aturaliya R.N."/>
            <person name="Bailey T.L."/>
            <person name="Bansal M."/>
            <person name="Baxter L."/>
            <person name="Beisel K.W."/>
            <person name="Bersano T."/>
            <person name="Bono H."/>
            <person name="Chalk A.M."/>
            <person name="Chiu K.P."/>
            <person name="Choudhary V."/>
            <person name="Christoffels A."/>
            <person name="Clutterbuck D.R."/>
            <person name="Crowe M.L."/>
            <person name="Dalla E."/>
            <person name="Dalrymple B.P."/>
            <person name="de Bono B."/>
            <person name="Della Gatta G."/>
            <person name="di Bernardo D."/>
            <person name="Down T."/>
            <person name="Engstrom P."/>
            <person name="Fagiolini M."/>
            <person name="Faulkner G."/>
            <person name="Fletcher C.F."/>
            <person name="Fukushima T."/>
            <person name="Furuno M."/>
            <person name="Futaki S."/>
            <person name="Gariboldi M."/>
            <person name="Georgii-Hemming P."/>
            <person name="Gingeras T.R."/>
            <person name="Gojobori T."/>
            <person name="Green R.E."/>
            <person name="Gustincich S."/>
            <person name="Harbers M."/>
            <person name="Hayashi Y."/>
            <person name="Hensch T.K."/>
            <person name="Hirokawa N."/>
            <person name="Hill D."/>
            <person name="Huminiecki L."/>
            <person name="Iacono M."/>
            <person name="Ikeo K."/>
            <person name="Iwama A."/>
            <person name="Ishikawa T."/>
            <person name="Jakt M."/>
            <person name="Kanapin A."/>
            <person name="Katoh M."/>
            <person name="Kawasawa Y."/>
            <person name="Kelso J."/>
            <person name="Kitamura H."/>
            <person name="Kitano H."/>
            <person name="Kollias G."/>
            <person name="Krishnan S.P."/>
            <person name="Kruger A."/>
            <person name="Kummerfeld S.K."/>
            <person name="Kurochkin I.V."/>
            <person name="Lareau L.F."/>
            <person name="Lazarevic D."/>
            <person name="Lipovich L."/>
            <person name="Liu J."/>
            <person name="Liuni S."/>
            <person name="McWilliam S."/>
            <person name="Madan Babu M."/>
            <person name="Madera M."/>
            <person name="Marchionni L."/>
            <person name="Matsuda H."/>
            <person name="Matsuzawa S."/>
            <person name="Miki H."/>
            <person name="Mignone F."/>
            <person name="Miyake S."/>
            <person name="Morris K."/>
            <person name="Mottagui-Tabar S."/>
            <person name="Mulder N."/>
            <person name="Nakano N."/>
            <person name="Nakauchi H."/>
            <person name="Ng P."/>
            <person name="Nilsson R."/>
            <person name="Nishiguchi S."/>
            <person name="Nishikawa S."/>
            <person name="Nori F."/>
            <person name="Ohara O."/>
            <person name="Okazaki Y."/>
            <person name="Orlando V."/>
            <person name="Pang K.C."/>
            <person name="Pavan W.J."/>
            <person name="Pavesi G."/>
            <person name="Pesole G."/>
            <person name="Petrovsky N."/>
            <person name="Piazza S."/>
            <person name="Reed J."/>
            <person name="Reid J.F."/>
            <person name="Ring B.Z."/>
            <person name="Ringwald M."/>
            <person name="Rost B."/>
            <person name="Ruan Y."/>
            <person name="Salzberg S.L."/>
            <person name="Sandelin A."/>
            <person name="Schneider C."/>
            <person name="Schoenbach C."/>
            <person name="Sekiguchi K."/>
            <person name="Semple C.A."/>
            <person name="Seno S."/>
            <person name="Sessa L."/>
            <person name="Sheng Y."/>
            <person name="Shibata Y."/>
            <person name="Shimada H."/>
            <person name="Shimada K."/>
            <person name="Silva D."/>
            <person name="Sinclair B."/>
            <person name="Sperling S."/>
            <person name="Stupka E."/>
            <person name="Sugiura K."/>
            <person name="Sultana R."/>
            <person name="Takenaka Y."/>
            <person name="Taki K."/>
            <person name="Tammoja K."/>
            <person name="Tan S.L."/>
            <person name="Tang S."/>
            <person name="Taylor M.S."/>
            <person name="Tegner J."/>
            <person name="Teichmann S.A."/>
            <person name="Ueda H.R."/>
            <person name="van Nimwegen E."/>
            <person name="Verardo R."/>
            <person name="Wei C.L."/>
            <person name="Yagi K."/>
            <person name="Yamanishi H."/>
            <person name="Zabarovsky E."/>
            <person name="Zhu S."/>
            <person name="Zimmer A."/>
            <person name="Hide W."/>
            <person name="Bult C."/>
            <person name="Grimmond S.M."/>
            <person name="Teasdale R.D."/>
            <person name="Liu E.T."/>
            <person name="Brusic V."/>
            <person name="Quackenbush J."/>
            <person name="Wahlestedt C."/>
            <person name="Mattick J.S."/>
            <person name="Hume D.A."/>
            <person name="Kai C."/>
            <person name="Sasaki D."/>
            <person name="Tomaru Y."/>
            <person name="Fukuda S."/>
            <person name="Kanamori-Katayama M."/>
            <person name="Suzuki M."/>
            <person name="Aoki J."/>
            <person name="Arakawa T."/>
            <person name="Iida J."/>
            <person name="Imamura K."/>
            <person name="Itoh M."/>
            <person name="Kato T."/>
            <person name="Kawaji H."/>
            <person name="Kawagashira N."/>
            <person name="Kawashima T."/>
            <person name="Kojima M."/>
            <person name="Kondo S."/>
            <person name="Konno H."/>
            <person name="Nakano K."/>
            <person name="Ninomiya N."/>
            <person name="Nishio T."/>
            <person name="Okada M."/>
            <person name="Plessy C."/>
            <person name="Shibata K."/>
            <person name="Shiraki T."/>
            <person name="Suzuki S."/>
            <person name="Tagami M."/>
            <person name="Waki K."/>
            <person name="Watahiki A."/>
            <person name="Okamura-Oho Y."/>
            <person name="Suzuki H."/>
            <person name="Kawai J."/>
            <person name="Hayashizaki Y."/>
        </authorList>
    </citation>
    <scope>NUCLEOTIDE SEQUENCE [LARGE SCALE MRNA]</scope>
    <source>
        <strain>C57BL/6J</strain>
        <tissue>Head</tissue>
    </source>
</reference>
<reference key="2">
    <citation type="journal article" date="2004" name="Genome Res.">
        <title>The status, quality, and expansion of the NIH full-length cDNA project: the Mammalian Gene Collection (MGC).</title>
        <authorList>
            <consortium name="The MGC Project Team"/>
        </authorList>
    </citation>
    <scope>NUCLEOTIDE SEQUENCE [LARGE SCALE MRNA]</scope>
    <source>
        <strain>FVB/N</strain>
        <tissue>Liver</tissue>
    </source>
</reference>
<reference key="3">
    <citation type="journal article" date="2010" name="Cell">
        <title>A tissue-specific atlas of mouse protein phosphorylation and expression.</title>
        <authorList>
            <person name="Huttlin E.L."/>
            <person name="Jedrychowski M.P."/>
            <person name="Elias J.E."/>
            <person name="Goswami T."/>
            <person name="Rad R."/>
            <person name="Beausoleil S.A."/>
            <person name="Villen J."/>
            <person name="Haas W."/>
            <person name="Sowa M.E."/>
            <person name="Gygi S.P."/>
        </authorList>
    </citation>
    <scope>IDENTIFICATION BY MASS SPECTROMETRY [LARGE SCALE ANALYSIS]</scope>
    <source>
        <tissue>Brown adipose tissue</tissue>
        <tissue>Heart</tissue>
    </source>
</reference>
<reference key="4">
    <citation type="journal article" date="2017" name="Protein J.">
        <title>Mouse Nudt13 is a Mitochondrial Nudix Hydrolase with NAD(P)H Pyrophosphohydrolase Activity.</title>
        <authorList>
            <person name="Abdelraheim S.R."/>
            <person name="Spiller D.G."/>
            <person name="McLennan A.G."/>
        </authorList>
    </citation>
    <scope>FUNCTION</scope>
    <scope>CATALYTIC ACTIVITY</scope>
    <scope>COFACTOR</scope>
    <scope>BIOPHYSICOCHEMICAL PROPERTIES</scope>
    <scope>SUBCELLULAR LOCATION</scope>
</reference>
<reference key="5">
    <citation type="journal article" date="2019" name="Nat. Chem. Biol.">
        <title>Structural and mechanistic basis of mammalian Nudt12 RNA deNADding.</title>
        <authorList>
            <person name="Grudzien-Nogalska E."/>
            <person name="Wu Y."/>
            <person name="Jiao X."/>
            <person name="Cui H."/>
            <person name="Mateyak M.K."/>
            <person name="Hart R.P."/>
            <person name="Tong L."/>
            <person name="Kiledjian M."/>
        </authorList>
    </citation>
    <scope>FUNCTION</scope>
    <scope>CATALYTIC ACTIVITY</scope>
</reference>
<accession>Q8JZU0</accession>
<accession>Q9CXN4</accession>
<dbReference type="EC" id="3.6.1.22" evidence="3 4"/>
<dbReference type="EMBL" id="AK014204">
    <property type="protein sequence ID" value="BAB29203.1"/>
    <property type="status" value="ALT_INIT"/>
    <property type="molecule type" value="mRNA"/>
</dbReference>
<dbReference type="EMBL" id="BC037091">
    <property type="protein sequence ID" value="AAH37091.1"/>
    <property type="status" value="ALT_INIT"/>
    <property type="molecule type" value="mRNA"/>
</dbReference>
<dbReference type="CCDS" id="CCDS36815.1"/>
<dbReference type="RefSeq" id="NP_080617.2">
    <property type="nucleotide sequence ID" value="NM_026341.3"/>
</dbReference>
<dbReference type="RefSeq" id="XP_006519526.1">
    <property type="nucleotide sequence ID" value="XM_006519463.2"/>
</dbReference>
<dbReference type="SMR" id="Q8JZU0"/>
<dbReference type="FunCoup" id="Q8JZU0">
    <property type="interactions" value="595"/>
</dbReference>
<dbReference type="STRING" id="10090.ENSMUSP00000022343"/>
<dbReference type="iPTMnet" id="Q8JZU0"/>
<dbReference type="PhosphoSitePlus" id="Q8JZU0"/>
<dbReference type="jPOST" id="Q8JZU0"/>
<dbReference type="PaxDb" id="10090-ENSMUSP00000022343"/>
<dbReference type="ProteomicsDB" id="293808"/>
<dbReference type="Antibodypedia" id="29309">
    <property type="antibodies" value="65 antibodies from 20 providers"/>
</dbReference>
<dbReference type="DNASU" id="67725"/>
<dbReference type="Ensembl" id="ENSMUST00000022343.6">
    <property type="protein sequence ID" value="ENSMUSP00000022343.5"/>
    <property type="gene ID" value="ENSMUSG00000021809.11"/>
</dbReference>
<dbReference type="Ensembl" id="ENSMUST00000223663.2">
    <property type="protein sequence ID" value="ENSMUSP00000153558.2"/>
    <property type="gene ID" value="ENSMUSG00000021809.11"/>
</dbReference>
<dbReference type="GeneID" id="67725"/>
<dbReference type="KEGG" id="mmu:67725"/>
<dbReference type="UCSC" id="uc007sjb.1">
    <property type="organism name" value="mouse"/>
</dbReference>
<dbReference type="AGR" id="MGI:1914975"/>
<dbReference type="CTD" id="25961"/>
<dbReference type="MGI" id="MGI:1914975">
    <property type="gene designation" value="Nudt13"/>
</dbReference>
<dbReference type="VEuPathDB" id="HostDB:ENSMUSG00000021809"/>
<dbReference type="eggNOG" id="KOG3084">
    <property type="taxonomic scope" value="Eukaryota"/>
</dbReference>
<dbReference type="GeneTree" id="ENSGT00940000158879"/>
<dbReference type="HOGENOM" id="CLU_037162_0_0_1"/>
<dbReference type="InParanoid" id="Q8JZU0"/>
<dbReference type="OMA" id="PGQTEIH"/>
<dbReference type="OrthoDB" id="10249612at2759"/>
<dbReference type="PhylomeDB" id="Q8JZU0"/>
<dbReference type="TreeFam" id="TF106352"/>
<dbReference type="Reactome" id="R-MMU-499943">
    <property type="pathway name" value="Interconversion of nucleotide di- and triphosphates"/>
</dbReference>
<dbReference type="SABIO-RK" id="Q8JZU0"/>
<dbReference type="BioGRID-ORCS" id="67725">
    <property type="hits" value="3 hits in 78 CRISPR screens"/>
</dbReference>
<dbReference type="ChiTaRS" id="Nudt13">
    <property type="organism name" value="mouse"/>
</dbReference>
<dbReference type="PRO" id="PR:Q8JZU0"/>
<dbReference type="Proteomes" id="UP000000589">
    <property type="component" value="Chromosome 14"/>
</dbReference>
<dbReference type="RNAct" id="Q8JZU0">
    <property type="molecule type" value="protein"/>
</dbReference>
<dbReference type="Bgee" id="ENSMUSG00000021809">
    <property type="expression patterns" value="Expressed in ascending aorta and 251 other cell types or tissues"/>
</dbReference>
<dbReference type="ExpressionAtlas" id="Q8JZU0">
    <property type="expression patterns" value="baseline and differential"/>
</dbReference>
<dbReference type="GO" id="GO:0005739">
    <property type="term" value="C:mitochondrion"/>
    <property type="evidence" value="ECO:0000314"/>
    <property type="project" value="UniProtKB"/>
</dbReference>
<dbReference type="GO" id="GO:0046872">
    <property type="term" value="F:metal ion binding"/>
    <property type="evidence" value="ECO:0007669"/>
    <property type="project" value="UniProtKB-KW"/>
</dbReference>
<dbReference type="GO" id="GO:0000210">
    <property type="term" value="F:NAD+ diphosphatase activity"/>
    <property type="evidence" value="ECO:0007669"/>
    <property type="project" value="RHEA"/>
</dbReference>
<dbReference type="GO" id="GO:0035529">
    <property type="term" value="F:NADH pyrophosphatase activity"/>
    <property type="evidence" value="ECO:0000314"/>
    <property type="project" value="UniProtKB"/>
</dbReference>
<dbReference type="GO" id="GO:0010943">
    <property type="term" value="F:NADPH pyrophosphatase activity"/>
    <property type="evidence" value="ECO:0007669"/>
    <property type="project" value="RHEA"/>
</dbReference>
<dbReference type="CDD" id="cd03429">
    <property type="entry name" value="NUDIX_NADH_pyrophosphatase_Nudt13"/>
    <property type="match status" value="1"/>
</dbReference>
<dbReference type="FunFam" id="3.90.79.10:FF:000059">
    <property type="entry name" value="Nucleoside diphosphate-linked moiety X motif 13"/>
    <property type="match status" value="1"/>
</dbReference>
<dbReference type="Gene3D" id="3.90.79.20">
    <property type="match status" value="1"/>
</dbReference>
<dbReference type="Gene3D" id="3.90.79.10">
    <property type="entry name" value="Nucleoside Triphosphate Pyrophosphohydrolase"/>
    <property type="match status" value="1"/>
</dbReference>
<dbReference type="InterPro" id="IPR015375">
    <property type="entry name" value="NADH_PPase-like_N"/>
</dbReference>
<dbReference type="InterPro" id="IPR049734">
    <property type="entry name" value="NudC-like_C"/>
</dbReference>
<dbReference type="InterPro" id="IPR015797">
    <property type="entry name" value="NUDIX_hydrolase-like_dom_sf"/>
</dbReference>
<dbReference type="InterPro" id="IPR020084">
    <property type="entry name" value="NUDIX_hydrolase_CS"/>
</dbReference>
<dbReference type="InterPro" id="IPR000086">
    <property type="entry name" value="NUDIX_hydrolase_dom"/>
</dbReference>
<dbReference type="InterPro" id="IPR015376">
    <property type="entry name" value="Znr_NADH_PPase"/>
</dbReference>
<dbReference type="NCBIfam" id="NF001299">
    <property type="entry name" value="PRK00241.1"/>
    <property type="match status" value="1"/>
</dbReference>
<dbReference type="PANTHER" id="PTHR11383:SF3">
    <property type="entry name" value="NAD(P)H PYROPHOSPHATASE NUDT13, MITOCHONDRIAL"/>
    <property type="match status" value="1"/>
</dbReference>
<dbReference type="PANTHER" id="PTHR11383">
    <property type="entry name" value="NUCLEOSIDE DIPHOSPHATE-LINKED MOIETY X MOTIF 13"/>
    <property type="match status" value="1"/>
</dbReference>
<dbReference type="Pfam" id="PF00293">
    <property type="entry name" value="NUDIX"/>
    <property type="match status" value="1"/>
</dbReference>
<dbReference type="Pfam" id="PF09296">
    <property type="entry name" value="NUDIX-like"/>
    <property type="match status" value="1"/>
</dbReference>
<dbReference type="Pfam" id="PF09297">
    <property type="entry name" value="Zn_ribbon_NUD"/>
    <property type="match status" value="1"/>
</dbReference>
<dbReference type="SUPFAM" id="SSF55811">
    <property type="entry name" value="Nudix"/>
    <property type="match status" value="1"/>
</dbReference>
<dbReference type="PROSITE" id="PS51462">
    <property type="entry name" value="NUDIX"/>
    <property type="match status" value="1"/>
</dbReference>
<dbReference type="PROSITE" id="PS00893">
    <property type="entry name" value="NUDIX_BOX"/>
    <property type="match status" value="1"/>
</dbReference>
<organism>
    <name type="scientific">Mus musculus</name>
    <name type="common">Mouse</name>
    <dbReference type="NCBI Taxonomy" id="10090"/>
    <lineage>
        <taxon>Eukaryota</taxon>
        <taxon>Metazoa</taxon>
        <taxon>Chordata</taxon>
        <taxon>Craniata</taxon>
        <taxon>Vertebrata</taxon>
        <taxon>Euteleostomi</taxon>
        <taxon>Mammalia</taxon>
        <taxon>Eutheria</taxon>
        <taxon>Euarchontoglires</taxon>
        <taxon>Glires</taxon>
        <taxon>Rodentia</taxon>
        <taxon>Myomorpha</taxon>
        <taxon>Muroidea</taxon>
        <taxon>Muridae</taxon>
        <taxon>Murinae</taxon>
        <taxon>Mus</taxon>
        <taxon>Mus</taxon>
    </lineage>
</organism>
<feature type="transit peptide" description="Mitochondrion" evidence="1">
    <location>
        <begin position="1"/>
        <end position="20"/>
    </location>
</feature>
<feature type="chain" id="PRO_0000057112" description="NAD(P)H pyrophosphatase NUDT13, mitochondrial" evidence="1">
    <location>
        <begin position="21"/>
        <end position="352"/>
    </location>
</feature>
<feature type="domain" description="Nudix hydrolase" evidence="2">
    <location>
        <begin position="196"/>
        <end position="323"/>
    </location>
</feature>
<feature type="short sequence motif" description="Nudix box" evidence="2">
    <location>
        <begin position="216"/>
        <end position="240"/>
    </location>
</feature>
<protein>
    <recommendedName>
        <fullName evidence="6">NAD(P)H pyrophosphatase NUDT13, mitochondrial</fullName>
        <ecNumber evidence="3 4">3.6.1.22</ecNumber>
    </recommendedName>
    <alternativeName>
        <fullName evidence="5">Nucleoside diphosphate-linked moiety X motif 13</fullName>
        <shortName evidence="5">Nudix motif 13</shortName>
    </alternativeName>
</protein>
<evidence type="ECO:0000255" key="1"/>
<evidence type="ECO:0000255" key="2">
    <source>
        <dbReference type="PROSITE-ProRule" id="PRU00794"/>
    </source>
</evidence>
<evidence type="ECO:0000269" key="3">
    <source>
    </source>
</evidence>
<evidence type="ECO:0000269" key="4">
    <source>
    </source>
</evidence>
<evidence type="ECO:0000303" key="5">
    <source>
    </source>
</evidence>
<evidence type="ECO:0000305" key="6"/>
<evidence type="ECO:0000312" key="7">
    <source>
        <dbReference type="MGI" id="MGI:1914975"/>
    </source>
</evidence>
<gene>
    <name evidence="5 7" type="primary">Nudt13</name>
</gene>
<proteinExistence type="evidence at protein level"/>
<keyword id="KW-0378">Hydrolase</keyword>
<keyword id="KW-0460">Magnesium</keyword>
<keyword id="KW-0464">Manganese</keyword>
<keyword id="KW-0479">Metal-binding</keyword>
<keyword id="KW-0496">Mitochondrion</keyword>
<keyword id="KW-0520">NAD</keyword>
<keyword id="KW-0521">NADP</keyword>
<keyword id="KW-1185">Reference proteome</keyword>
<keyword id="KW-0809">Transit peptide</keyword>
<comment type="function">
    <text evidence="3 4">NAD(P)H pyrophosphatase that hydrolyzes NADH into NMNH and AMP, and NADPH into NMNH and 2',5'-ADP (PubMed:28755312). Has a marked preference for the reduced pyridine nucleotides (PubMed:28755312). Does not show activity toward NAD-capped RNAs; the NAD-cap is an atypical cap present at the 5'-end of some RNAs (PubMed:31101919).</text>
</comment>
<comment type="catalytic activity">
    <reaction evidence="3">
        <text>NADH + H2O = reduced beta-nicotinamide D-ribonucleotide + AMP + 2 H(+)</text>
        <dbReference type="Rhea" id="RHEA:48868"/>
        <dbReference type="ChEBI" id="CHEBI:15377"/>
        <dbReference type="ChEBI" id="CHEBI:15378"/>
        <dbReference type="ChEBI" id="CHEBI:57945"/>
        <dbReference type="ChEBI" id="CHEBI:90832"/>
        <dbReference type="ChEBI" id="CHEBI:456215"/>
        <dbReference type="EC" id="3.6.1.22"/>
    </reaction>
    <physiologicalReaction direction="left-to-right" evidence="3">
        <dbReference type="Rhea" id="RHEA:48869"/>
    </physiologicalReaction>
</comment>
<comment type="catalytic activity">
    <reaction evidence="4">
        <text>NAD(+) + H2O = beta-nicotinamide D-ribonucleotide + AMP + 2 H(+)</text>
        <dbReference type="Rhea" id="RHEA:11800"/>
        <dbReference type="ChEBI" id="CHEBI:14649"/>
        <dbReference type="ChEBI" id="CHEBI:15377"/>
        <dbReference type="ChEBI" id="CHEBI:15378"/>
        <dbReference type="ChEBI" id="CHEBI:57540"/>
        <dbReference type="ChEBI" id="CHEBI:456215"/>
        <dbReference type="EC" id="3.6.1.22"/>
    </reaction>
    <physiologicalReaction direction="left-to-right" evidence="4">
        <dbReference type="Rhea" id="RHEA:11801"/>
    </physiologicalReaction>
</comment>
<comment type="catalytic activity">
    <reaction evidence="4">
        <text>NADPH + H2O = reduced beta-nicotinamide D-ribonucleotide + adenosine 2',5'-bisphosphate + 2 H(+)</text>
        <dbReference type="Rhea" id="RHEA:60820"/>
        <dbReference type="ChEBI" id="CHEBI:15377"/>
        <dbReference type="ChEBI" id="CHEBI:15378"/>
        <dbReference type="ChEBI" id="CHEBI:57783"/>
        <dbReference type="ChEBI" id="CHEBI:90832"/>
        <dbReference type="ChEBI" id="CHEBI:194156"/>
    </reaction>
    <physiologicalReaction direction="left-to-right" evidence="4">
        <dbReference type="Rhea" id="RHEA:60821"/>
    </physiologicalReaction>
</comment>
<comment type="cofactor">
    <cofactor evidence="3">
        <name>Mg(2+)</name>
        <dbReference type="ChEBI" id="CHEBI:18420"/>
    </cofactor>
    <cofactor evidence="3">
        <name>Mn(2+)</name>
        <dbReference type="ChEBI" id="CHEBI:29035"/>
    </cofactor>
    <text evidence="3">Divalent metal cations. Mg(2+) or Mn(2+).</text>
</comment>
<comment type="biophysicochemical properties">
    <kinetics>
        <KM evidence="3">0.34 mM for NADH</KM>
        <text evidence="3">kcat is 7 sec(-1) for NADH.</text>
    </kinetics>
    <phDependence>
        <text evidence="3">Optimum pH is 7.8-8.2.</text>
    </phDependence>
</comment>
<comment type="subcellular location">
    <subcellularLocation>
        <location evidence="3">Mitochondrion</location>
    </subcellularLocation>
</comment>
<comment type="similarity">
    <text evidence="6">Belongs to the Nudix hydrolase family.</text>
</comment>
<comment type="sequence caution" evidence="6">
    <conflict type="erroneous initiation">
        <sequence resource="EMBL-CDS" id="AAH37091"/>
    </conflict>
</comment>
<comment type="sequence caution" evidence="6">
    <conflict type="erroneous initiation">
        <sequence resource="EMBL-CDS" id="BAB29203"/>
    </conflict>
</comment>
<sequence length="352" mass="39137">MSLYCRTFFRRKSFGCYRLLSTYVTKARYLFELKEDEEACRKAQKTGVFYLFHDLDPLLQASGHRYLVPRLSRAELEGLLGKFGQDSQRIEDSVLVGCSEQQEAWFALDLGLKSASSSRASLPKSEMEAELGGSFIKLRQALFQLNSVDSSLLFTAQALLRWHDGHQFCSKSGQPTQKNVAGSKRVCPSSKIIYYPQMAPVVITLVSDGARCLLARQSSFPKGLYSALAGFCDIGESVEETVHREVAEEVGLEVENIQYSASQHWPFPNSSLMIACHATVKPGHTEIQVNLKELEAAAWFSLDEVTTALRRKGSLALQPSEASPLLLPPKLAIAHHLIKKWVETRSCSSLAA</sequence>